<feature type="chain" id="PRO_0000283433" description="F-box protein At3g19470">
    <location>
        <begin position="1"/>
        <end position="382"/>
    </location>
</feature>
<feature type="domain" description="F-box" evidence="1">
    <location>
        <begin position="1"/>
        <end position="44"/>
    </location>
</feature>
<dbReference type="EMBL" id="AB025624">
    <property type="protein sequence ID" value="BAB02472.1"/>
    <property type="status" value="ALT_SEQ"/>
    <property type="molecule type" value="Genomic_DNA"/>
</dbReference>
<dbReference type="EMBL" id="CP002686">
    <property type="protein sequence ID" value="AEE76244.1"/>
    <property type="molecule type" value="Genomic_DNA"/>
</dbReference>
<dbReference type="EMBL" id="CP002686">
    <property type="protein sequence ID" value="AEE76245.1"/>
    <property type="molecule type" value="Genomic_DNA"/>
</dbReference>
<dbReference type="EMBL" id="BT006465">
    <property type="protein sequence ID" value="AAP21273.1"/>
    <property type="molecule type" value="mRNA"/>
</dbReference>
<dbReference type="EMBL" id="AK228280">
    <property type="protein sequence ID" value="BAF00226.1"/>
    <property type="molecule type" value="mRNA"/>
</dbReference>
<dbReference type="EMBL" id="AY086641">
    <property type="protein sequence ID" value="AAM63699.1"/>
    <property type="molecule type" value="mRNA"/>
</dbReference>
<dbReference type="RefSeq" id="NP_001030727.1">
    <property type="nucleotide sequence ID" value="NM_001035650.3"/>
</dbReference>
<dbReference type="RefSeq" id="NP_566636.1">
    <property type="nucleotide sequence ID" value="NM_112834.1"/>
</dbReference>
<dbReference type="STRING" id="3702.Q8LCE9"/>
<dbReference type="PaxDb" id="3702-AT3G19470.2"/>
<dbReference type="ProteomicsDB" id="230881"/>
<dbReference type="EnsemblPlants" id="AT3G19470.1">
    <property type="protein sequence ID" value="AT3G19470.1"/>
    <property type="gene ID" value="AT3G19470"/>
</dbReference>
<dbReference type="EnsemblPlants" id="AT3G19470.2">
    <property type="protein sequence ID" value="AT3G19470.2"/>
    <property type="gene ID" value="AT3G19470"/>
</dbReference>
<dbReference type="GeneID" id="821481"/>
<dbReference type="Gramene" id="AT3G19470.1">
    <property type="protein sequence ID" value="AT3G19470.1"/>
    <property type="gene ID" value="AT3G19470"/>
</dbReference>
<dbReference type="Gramene" id="AT3G19470.2">
    <property type="protein sequence ID" value="AT3G19470.2"/>
    <property type="gene ID" value="AT3G19470"/>
</dbReference>
<dbReference type="KEGG" id="ath:AT3G19470"/>
<dbReference type="Araport" id="AT3G19470"/>
<dbReference type="TAIR" id="AT3G19470"/>
<dbReference type="HOGENOM" id="CLU_034692_0_0_1"/>
<dbReference type="InParanoid" id="Q8LCE9"/>
<dbReference type="OMA" id="FVECKIY"/>
<dbReference type="PhylomeDB" id="Q8LCE9"/>
<dbReference type="PRO" id="PR:Q8LCE9"/>
<dbReference type="Proteomes" id="UP000006548">
    <property type="component" value="Chromosome 3"/>
</dbReference>
<dbReference type="ExpressionAtlas" id="Q8LCE9">
    <property type="expression patterns" value="baseline and differential"/>
</dbReference>
<dbReference type="InterPro" id="IPR050233">
    <property type="entry name" value="A_thaliana_F-box"/>
</dbReference>
<dbReference type="InterPro" id="IPR006527">
    <property type="entry name" value="F-box-assoc_dom_typ1"/>
</dbReference>
<dbReference type="InterPro" id="IPR017451">
    <property type="entry name" value="F-box-assoc_interact_dom"/>
</dbReference>
<dbReference type="InterPro" id="IPR036047">
    <property type="entry name" value="F-box-like_dom_sf"/>
</dbReference>
<dbReference type="InterPro" id="IPR001810">
    <property type="entry name" value="F-box_dom"/>
</dbReference>
<dbReference type="NCBIfam" id="TIGR01640">
    <property type="entry name" value="F_box_assoc_1"/>
    <property type="match status" value="1"/>
</dbReference>
<dbReference type="PANTHER" id="PTHR47993:SF289">
    <property type="entry name" value="F-BOX ASSOCIATED UBIQUITINATION EFFECTOR FAMILY PROTEIN"/>
    <property type="match status" value="1"/>
</dbReference>
<dbReference type="PANTHER" id="PTHR47993">
    <property type="entry name" value="OS09G0372900 PROTEIN-RELATED"/>
    <property type="match status" value="1"/>
</dbReference>
<dbReference type="Pfam" id="PF07734">
    <property type="entry name" value="FBA_1"/>
    <property type="match status" value="1"/>
</dbReference>
<dbReference type="SUPFAM" id="SSF81383">
    <property type="entry name" value="F-box domain"/>
    <property type="match status" value="1"/>
</dbReference>
<dbReference type="PROSITE" id="PS50181">
    <property type="entry name" value="FBOX"/>
    <property type="match status" value="1"/>
</dbReference>
<sequence>MYNLPRDLPEEVLCRIPLTSLRPVRSTCKKWSTLSKCGSFAKKHLAQAKVLADAKEFMVVLMMNFRVYLMRVNLQNNVVESSSSSSSSSSSCIKREAKLISLGDEEADISQVFHCDGLLLCISITESKTRLVVWNPYWGHTRLFEPTHQFNKFDSYSYALGYDKSRKSHKILRGITCLDPFKIYDFNSDLWRDLDVTPEWHLWQMLHGVSLKGNAYWFARENYTETMDTDHFFLLCFDFTSETFGPPLPLPFEFAVSEDTMSVSSVREEQLVVLYQPWDYLQLDIWVTSKIEPNAVSWNSKVFLSVSLKQLVSPQFQLTFGSFFIDEEKKVAVVFDKDYDNKRNIAYIFGVDGSFKAVDLGDSDRKCFPLVCSYVPSLVQLN</sequence>
<gene>
    <name type="ordered locus">At3g19470</name>
    <name type="ORF">MLD14.21</name>
</gene>
<organism>
    <name type="scientific">Arabidopsis thaliana</name>
    <name type="common">Mouse-ear cress</name>
    <dbReference type="NCBI Taxonomy" id="3702"/>
    <lineage>
        <taxon>Eukaryota</taxon>
        <taxon>Viridiplantae</taxon>
        <taxon>Streptophyta</taxon>
        <taxon>Embryophyta</taxon>
        <taxon>Tracheophyta</taxon>
        <taxon>Spermatophyta</taxon>
        <taxon>Magnoliopsida</taxon>
        <taxon>eudicotyledons</taxon>
        <taxon>Gunneridae</taxon>
        <taxon>Pentapetalae</taxon>
        <taxon>rosids</taxon>
        <taxon>malvids</taxon>
        <taxon>Brassicales</taxon>
        <taxon>Brassicaceae</taxon>
        <taxon>Camelineae</taxon>
        <taxon>Arabidopsis</taxon>
    </lineage>
</organism>
<comment type="sequence caution" evidence="2">
    <conflict type="erroneous gene model prediction">
        <sequence resource="EMBL-CDS" id="BAB02472"/>
    </conflict>
</comment>
<reference key="1">
    <citation type="journal article" date="2000" name="DNA Res.">
        <title>Structural analysis of Arabidopsis thaliana chromosome 3. I. Sequence features of the regions of 4,504,864 bp covered by sixty P1 and TAC clones.</title>
        <authorList>
            <person name="Sato S."/>
            <person name="Nakamura Y."/>
            <person name="Kaneko T."/>
            <person name="Katoh T."/>
            <person name="Asamizu E."/>
            <person name="Tabata S."/>
        </authorList>
    </citation>
    <scope>NUCLEOTIDE SEQUENCE [LARGE SCALE GENOMIC DNA]</scope>
    <source>
        <strain>cv. Columbia</strain>
    </source>
</reference>
<reference key="2">
    <citation type="journal article" date="2017" name="Plant J.">
        <title>Araport11: a complete reannotation of the Arabidopsis thaliana reference genome.</title>
        <authorList>
            <person name="Cheng C.Y."/>
            <person name="Krishnakumar V."/>
            <person name="Chan A.P."/>
            <person name="Thibaud-Nissen F."/>
            <person name="Schobel S."/>
            <person name="Town C.D."/>
        </authorList>
    </citation>
    <scope>GENOME REANNOTATION</scope>
    <source>
        <strain>cv. Columbia</strain>
    </source>
</reference>
<reference key="3">
    <citation type="journal article" date="2003" name="Science">
        <title>Empirical analysis of transcriptional activity in the Arabidopsis genome.</title>
        <authorList>
            <person name="Yamada K."/>
            <person name="Lim J."/>
            <person name="Dale J.M."/>
            <person name="Chen H."/>
            <person name="Shinn P."/>
            <person name="Palm C.J."/>
            <person name="Southwick A.M."/>
            <person name="Wu H.C."/>
            <person name="Kim C.J."/>
            <person name="Nguyen M."/>
            <person name="Pham P.K."/>
            <person name="Cheuk R.F."/>
            <person name="Karlin-Newmann G."/>
            <person name="Liu S.X."/>
            <person name="Lam B."/>
            <person name="Sakano H."/>
            <person name="Wu T."/>
            <person name="Yu G."/>
            <person name="Miranda M."/>
            <person name="Quach H.L."/>
            <person name="Tripp M."/>
            <person name="Chang C.H."/>
            <person name="Lee J.M."/>
            <person name="Toriumi M.J."/>
            <person name="Chan M.M."/>
            <person name="Tang C.C."/>
            <person name="Onodera C.S."/>
            <person name="Deng J.M."/>
            <person name="Akiyama K."/>
            <person name="Ansari Y."/>
            <person name="Arakawa T."/>
            <person name="Banh J."/>
            <person name="Banno F."/>
            <person name="Bowser L."/>
            <person name="Brooks S.Y."/>
            <person name="Carninci P."/>
            <person name="Chao Q."/>
            <person name="Choy N."/>
            <person name="Enju A."/>
            <person name="Goldsmith A.D."/>
            <person name="Gurjal M."/>
            <person name="Hansen N.F."/>
            <person name="Hayashizaki Y."/>
            <person name="Johnson-Hopson C."/>
            <person name="Hsuan V.W."/>
            <person name="Iida K."/>
            <person name="Karnes M."/>
            <person name="Khan S."/>
            <person name="Koesema E."/>
            <person name="Ishida J."/>
            <person name="Jiang P.X."/>
            <person name="Jones T."/>
            <person name="Kawai J."/>
            <person name="Kamiya A."/>
            <person name="Meyers C."/>
            <person name="Nakajima M."/>
            <person name="Narusaka M."/>
            <person name="Seki M."/>
            <person name="Sakurai T."/>
            <person name="Satou M."/>
            <person name="Tamse R."/>
            <person name="Vaysberg M."/>
            <person name="Wallender E.K."/>
            <person name="Wong C."/>
            <person name="Yamamura Y."/>
            <person name="Yuan S."/>
            <person name="Shinozaki K."/>
            <person name="Davis R.W."/>
            <person name="Theologis A."/>
            <person name="Ecker J.R."/>
        </authorList>
    </citation>
    <scope>NUCLEOTIDE SEQUENCE [LARGE SCALE MRNA]</scope>
    <source>
        <strain>cv. Columbia</strain>
    </source>
</reference>
<reference key="4">
    <citation type="submission" date="2006-07" db="EMBL/GenBank/DDBJ databases">
        <title>Large-scale analysis of RIKEN Arabidopsis full-length (RAFL) cDNAs.</title>
        <authorList>
            <person name="Totoki Y."/>
            <person name="Seki M."/>
            <person name="Ishida J."/>
            <person name="Nakajima M."/>
            <person name="Enju A."/>
            <person name="Kamiya A."/>
            <person name="Narusaka M."/>
            <person name="Shin-i T."/>
            <person name="Nakagawa M."/>
            <person name="Sakamoto N."/>
            <person name="Oishi K."/>
            <person name="Kohara Y."/>
            <person name="Kobayashi M."/>
            <person name="Toyoda A."/>
            <person name="Sakaki Y."/>
            <person name="Sakurai T."/>
            <person name="Iida K."/>
            <person name="Akiyama K."/>
            <person name="Satou M."/>
            <person name="Toyoda T."/>
            <person name="Konagaya A."/>
            <person name="Carninci P."/>
            <person name="Kawai J."/>
            <person name="Hayashizaki Y."/>
            <person name="Shinozaki K."/>
        </authorList>
    </citation>
    <scope>NUCLEOTIDE SEQUENCE [LARGE SCALE MRNA]</scope>
    <source>
        <strain>cv. Columbia</strain>
    </source>
</reference>
<reference key="5">
    <citation type="submission" date="2002-03" db="EMBL/GenBank/DDBJ databases">
        <title>Full-length cDNA from Arabidopsis thaliana.</title>
        <authorList>
            <person name="Brover V.V."/>
            <person name="Troukhan M.E."/>
            <person name="Alexandrov N.A."/>
            <person name="Lu Y.-P."/>
            <person name="Flavell R.B."/>
            <person name="Feldmann K.A."/>
        </authorList>
    </citation>
    <scope>NUCLEOTIDE SEQUENCE [LARGE SCALE MRNA]</scope>
</reference>
<name>FB163_ARATH</name>
<protein>
    <recommendedName>
        <fullName>F-box protein At3g19470</fullName>
    </recommendedName>
</protein>
<proteinExistence type="evidence at transcript level"/>
<keyword id="KW-1185">Reference proteome</keyword>
<evidence type="ECO:0000255" key="1">
    <source>
        <dbReference type="PROSITE-ProRule" id="PRU00080"/>
    </source>
</evidence>
<evidence type="ECO:0000305" key="2"/>
<accession>Q8LCE9</accession>
<accession>Q9LT70</accession>